<evidence type="ECO:0000255" key="1">
    <source>
        <dbReference type="HAMAP-Rule" id="MF_00435"/>
    </source>
</evidence>
<evidence type="ECO:0000255" key="2">
    <source>
        <dbReference type="PROSITE-ProRule" id="PRU01197"/>
    </source>
</evidence>
<evidence type="ECO:0000255" key="3">
    <source>
        <dbReference type="PROSITE-ProRule" id="PRU01198"/>
    </source>
</evidence>
<sequence>MANYFNTLNLRQQLAQLGKCRFMGRDEFADGASYLQGKKVVIVGCGAQGLNQGLNMRDSGLDISYALRKEAIAEKRASWRKATENGFKVGTYEELIPQADLVVNLTPDKQHSDVVRSVQPLMKDGAALGYSHGFNIVEVGEQIRKDITVVMVAPKCPGTEVREEYKRGFGVPTLIAVHPENDPKGEGMAIAKAWAAATGGHRAGVLESSFVAEVKSDLMGEQTILCGMLQAGSLLCFDKLVEEGTDPAYAEKLIQFGWETITEALKQGGITLMMDRLSNPAKLRAYALSEQLKEIMAPLFQKHMDDIISGEFSSGMMADWANDDKKLLTWREETGKTAFETAPQYEGKIGEQEYFDKGVLMIAMVKAGVELAFETMVDSGIIEESAYYESLHELPLIANTIARKRLYEMNVVISDTAEYGNYLFSYACVPLLKPFMAELQPGDLGKAIPEGAVDNAQLRDVNEAIRSHAIEQVGKKLRGYMTDMKRIAVAG</sequence>
<accession>B7MGI6</accession>
<keyword id="KW-0028">Amino-acid biosynthesis</keyword>
<keyword id="KW-0100">Branched-chain amino acid biosynthesis</keyword>
<keyword id="KW-0460">Magnesium</keyword>
<keyword id="KW-0479">Metal-binding</keyword>
<keyword id="KW-0521">NADP</keyword>
<keyword id="KW-0560">Oxidoreductase</keyword>
<keyword id="KW-1185">Reference proteome</keyword>
<keyword id="KW-0677">Repeat</keyword>
<reference key="1">
    <citation type="journal article" date="2009" name="PLoS Genet.">
        <title>Organised genome dynamics in the Escherichia coli species results in highly diverse adaptive paths.</title>
        <authorList>
            <person name="Touchon M."/>
            <person name="Hoede C."/>
            <person name="Tenaillon O."/>
            <person name="Barbe V."/>
            <person name="Baeriswyl S."/>
            <person name="Bidet P."/>
            <person name="Bingen E."/>
            <person name="Bonacorsi S."/>
            <person name="Bouchier C."/>
            <person name="Bouvet O."/>
            <person name="Calteau A."/>
            <person name="Chiapello H."/>
            <person name="Clermont O."/>
            <person name="Cruveiller S."/>
            <person name="Danchin A."/>
            <person name="Diard M."/>
            <person name="Dossat C."/>
            <person name="Karoui M.E."/>
            <person name="Frapy E."/>
            <person name="Garry L."/>
            <person name="Ghigo J.M."/>
            <person name="Gilles A.M."/>
            <person name="Johnson J."/>
            <person name="Le Bouguenec C."/>
            <person name="Lescat M."/>
            <person name="Mangenot S."/>
            <person name="Martinez-Jehanne V."/>
            <person name="Matic I."/>
            <person name="Nassif X."/>
            <person name="Oztas S."/>
            <person name="Petit M.A."/>
            <person name="Pichon C."/>
            <person name="Rouy Z."/>
            <person name="Ruf C.S."/>
            <person name="Schneider D."/>
            <person name="Tourret J."/>
            <person name="Vacherie B."/>
            <person name="Vallenet D."/>
            <person name="Medigue C."/>
            <person name="Rocha E.P.C."/>
            <person name="Denamur E."/>
        </authorList>
    </citation>
    <scope>NUCLEOTIDE SEQUENCE [LARGE SCALE GENOMIC DNA]</scope>
    <source>
        <strain>S88 / ExPEC</strain>
    </source>
</reference>
<organism>
    <name type="scientific">Escherichia coli O45:K1 (strain S88 / ExPEC)</name>
    <dbReference type="NCBI Taxonomy" id="585035"/>
    <lineage>
        <taxon>Bacteria</taxon>
        <taxon>Pseudomonadati</taxon>
        <taxon>Pseudomonadota</taxon>
        <taxon>Gammaproteobacteria</taxon>
        <taxon>Enterobacterales</taxon>
        <taxon>Enterobacteriaceae</taxon>
        <taxon>Escherichia</taxon>
    </lineage>
</organism>
<dbReference type="EC" id="1.1.1.86" evidence="1"/>
<dbReference type="EMBL" id="CU928161">
    <property type="protein sequence ID" value="CAR05394.1"/>
    <property type="molecule type" value="Genomic_DNA"/>
</dbReference>
<dbReference type="RefSeq" id="WP_001296589.1">
    <property type="nucleotide sequence ID" value="NC_011742.1"/>
</dbReference>
<dbReference type="SMR" id="B7MGI6"/>
<dbReference type="KEGG" id="ecz:ECS88_4197"/>
<dbReference type="HOGENOM" id="CLU_551905_0_0_6"/>
<dbReference type="UniPathway" id="UPA00047">
    <property type="reaction ID" value="UER00056"/>
</dbReference>
<dbReference type="UniPathway" id="UPA00049">
    <property type="reaction ID" value="UER00060"/>
</dbReference>
<dbReference type="Proteomes" id="UP000000747">
    <property type="component" value="Chromosome"/>
</dbReference>
<dbReference type="GO" id="GO:0005829">
    <property type="term" value="C:cytosol"/>
    <property type="evidence" value="ECO:0007669"/>
    <property type="project" value="TreeGrafter"/>
</dbReference>
<dbReference type="GO" id="GO:0004455">
    <property type="term" value="F:ketol-acid reductoisomerase activity"/>
    <property type="evidence" value="ECO:0007669"/>
    <property type="project" value="UniProtKB-UniRule"/>
</dbReference>
<dbReference type="GO" id="GO:0000287">
    <property type="term" value="F:magnesium ion binding"/>
    <property type="evidence" value="ECO:0007669"/>
    <property type="project" value="UniProtKB-UniRule"/>
</dbReference>
<dbReference type="GO" id="GO:0009097">
    <property type="term" value="P:isoleucine biosynthetic process"/>
    <property type="evidence" value="ECO:0007669"/>
    <property type="project" value="UniProtKB-UniRule"/>
</dbReference>
<dbReference type="GO" id="GO:0009099">
    <property type="term" value="P:L-valine biosynthetic process"/>
    <property type="evidence" value="ECO:0007669"/>
    <property type="project" value="UniProtKB-UniRule"/>
</dbReference>
<dbReference type="FunFam" id="1.10.1040.10:FF:000007">
    <property type="entry name" value="Ketol-acid reductoisomerase (NADP(+))"/>
    <property type="match status" value="1"/>
</dbReference>
<dbReference type="FunFam" id="3.40.50.720:FF:000043">
    <property type="entry name" value="Ketol-acid reductoisomerase (NADP(+))"/>
    <property type="match status" value="1"/>
</dbReference>
<dbReference type="Gene3D" id="1.10.1040.10">
    <property type="entry name" value="N-(1-d-carboxylethyl)-l-norvaline Dehydrogenase, domain 2"/>
    <property type="match status" value="1"/>
</dbReference>
<dbReference type="Gene3D" id="3.40.50.720">
    <property type="entry name" value="NAD(P)-binding Rossmann-like Domain"/>
    <property type="match status" value="1"/>
</dbReference>
<dbReference type="HAMAP" id="MF_00435">
    <property type="entry name" value="IlvC"/>
    <property type="match status" value="1"/>
</dbReference>
<dbReference type="InterPro" id="IPR008927">
    <property type="entry name" value="6-PGluconate_DH-like_C_sf"/>
</dbReference>
<dbReference type="InterPro" id="IPR013328">
    <property type="entry name" value="6PGD_dom2"/>
</dbReference>
<dbReference type="InterPro" id="IPR013023">
    <property type="entry name" value="KARI"/>
</dbReference>
<dbReference type="InterPro" id="IPR000506">
    <property type="entry name" value="KARI_C"/>
</dbReference>
<dbReference type="InterPro" id="IPR013116">
    <property type="entry name" value="KARI_N"/>
</dbReference>
<dbReference type="InterPro" id="IPR036291">
    <property type="entry name" value="NAD(P)-bd_dom_sf"/>
</dbReference>
<dbReference type="NCBIfam" id="TIGR00465">
    <property type="entry name" value="ilvC"/>
    <property type="match status" value="1"/>
</dbReference>
<dbReference type="NCBIfam" id="NF003557">
    <property type="entry name" value="PRK05225.1"/>
    <property type="match status" value="1"/>
</dbReference>
<dbReference type="PANTHER" id="PTHR21371">
    <property type="entry name" value="KETOL-ACID REDUCTOISOMERASE, MITOCHONDRIAL"/>
    <property type="match status" value="1"/>
</dbReference>
<dbReference type="PANTHER" id="PTHR21371:SF1">
    <property type="entry name" value="KETOL-ACID REDUCTOISOMERASE, MITOCHONDRIAL"/>
    <property type="match status" value="1"/>
</dbReference>
<dbReference type="Pfam" id="PF01450">
    <property type="entry name" value="KARI_C"/>
    <property type="match status" value="2"/>
</dbReference>
<dbReference type="Pfam" id="PF07991">
    <property type="entry name" value="KARI_N"/>
    <property type="match status" value="1"/>
</dbReference>
<dbReference type="SUPFAM" id="SSF48179">
    <property type="entry name" value="6-phosphogluconate dehydrogenase C-terminal domain-like"/>
    <property type="match status" value="2"/>
</dbReference>
<dbReference type="SUPFAM" id="SSF51735">
    <property type="entry name" value="NAD(P)-binding Rossmann-fold domains"/>
    <property type="match status" value="1"/>
</dbReference>
<dbReference type="PROSITE" id="PS51851">
    <property type="entry name" value="KARI_C"/>
    <property type="match status" value="2"/>
</dbReference>
<dbReference type="PROSITE" id="PS51850">
    <property type="entry name" value="KARI_N"/>
    <property type="match status" value="1"/>
</dbReference>
<protein>
    <recommendedName>
        <fullName evidence="1">Ketol-acid reductoisomerase (NADP(+))</fullName>
        <shortName evidence="1">KARI</shortName>
        <ecNumber evidence="1">1.1.1.86</ecNumber>
    </recommendedName>
    <alternativeName>
        <fullName evidence="1">Acetohydroxy-acid isomeroreductase</fullName>
        <shortName evidence="1">AHIR</shortName>
    </alternativeName>
    <alternativeName>
        <fullName evidence="1">Alpha-keto-beta-hydroxylacyl reductoisomerase</fullName>
    </alternativeName>
    <alternativeName>
        <fullName evidence="1">Ketol-acid reductoisomerase type 2</fullName>
    </alternativeName>
    <alternativeName>
        <fullName evidence="1">Ketol-acid reductoisomerase type II</fullName>
    </alternativeName>
</protein>
<feature type="chain" id="PRO_1000190960" description="Ketol-acid reductoisomerase (NADP(+))">
    <location>
        <begin position="1"/>
        <end position="491"/>
    </location>
</feature>
<feature type="domain" description="KARI N-terminal Rossmann" evidence="2">
    <location>
        <begin position="15"/>
        <end position="208"/>
    </location>
</feature>
<feature type="domain" description="KARI C-terminal knotted 1" evidence="3">
    <location>
        <begin position="209"/>
        <end position="344"/>
    </location>
</feature>
<feature type="domain" description="KARI C-terminal knotted 2" evidence="3">
    <location>
        <begin position="345"/>
        <end position="484"/>
    </location>
</feature>
<feature type="active site" evidence="1">
    <location>
        <position position="132"/>
    </location>
</feature>
<feature type="binding site" evidence="1">
    <location>
        <begin position="45"/>
        <end position="48"/>
    </location>
    <ligand>
        <name>NADP(+)</name>
        <dbReference type="ChEBI" id="CHEBI:58349"/>
    </ligand>
</feature>
<feature type="binding site" evidence="1">
    <location>
        <position position="68"/>
    </location>
    <ligand>
        <name>NADP(+)</name>
        <dbReference type="ChEBI" id="CHEBI:58349"/>
    </ligand>
</feature>
<feature type="binding site" evidence="1">
    <location>
        <position position="76"/>
    </location>
    <ligand>
        <name>NADP(+)</name>
        <dbReference type="ChEBI" id="CHEBI:58349"/>
    </ligand>
</feature>
<feature type="binding site" evidence="1">
    <location>
        <position position="78"/>
    </location>
    <ligand>
        <name>NADP(+)</name>
        <dbReference type="ChEBI" id="CHEBI:58349"/>
    </ligand>
</feature>
<feature type="binding site" evidence="1">
    <location>
        <begin position="108"/>
        <end position="110"/>
    </location>
    <ligand>
        <name>NADP(+)</name>
        <dbReference type="ChEBI" id="CHEBI:58349"/>
    </ligand>
</feature>
<feature type="binding site" evidence="1">
    <location>
        <position position="158"/>
    </location>
    <ligand>
        <name>NADP(+)</name>
        <dbReference type="ChEBI" id="CHEBI:58349"/>
    </ligand>
</feature>
<feature type="binding site" evidence="1">
    <location>
        <position position="217"/>
    </location>
    <ligand>
        <name>Mg(2+)</name>
        <dbReference type="ChEBI" id="CHEBI:18420"/>
        <label>1</label>
    </ligand>
</feature>
<feature type="binding site" evidence="1">
    <location>
        <position position="217"/>
    </location>
    <ligand>
        <name>Mg(2+)</name>
        <dbReference type="ChEBI" id="CHEBI:18420"/>
        <label>2</label>
    </ligand>
</feature>
<feature type="binding site" evidence="1">
    <location>
        <position position="221"/>
    </location>
    <ligand>
        <name>Mg(2+)</name>
        <dbReference type="ChEBI" id="CHEBI:18420"/>
        <label>1</label>
    </ligand>
</feature>
<feature type="binding site" evidence="1">
    <location>
        <position position="389"/>
    </location>
    <ligand>
        <name>Mg(2+)</name>
        <dbReference type="ChEBI" id="CHEBI:18420"/>
        <label>2</label>
    </ligand>
</feature>
<feature type="binding site" evidence="1">
    <location>
        <position position="393"/>
    </location>
    <ligand>
        <name>Mg(2+)</name>
        <dbReference type="ChEBI" id="CHEBI:18420"/>
        <label>2</label>
    </ligand>
</feature>
<feature type="binding site" evidence="1">
    <location>
        <position position="414"/>
    </location>
    <ligand>
        <name>substrate</name>
    </ligand>
</feature>
<gene>
    <name evidence="1" type="primary">ilvC</name>
    <name type="ordered locus">ECS88_4197</name>
</gene>
<comment type="function">
    <text evidence="1">Involved in the biosynthesis of branched-chain amino acids (BCAA). Catalyzes an alkyl-migration followed by a ketol-acid reduction of (S)-2-acetolactate (S2AL) to yield (R)-2,3-dihydroxy-isovalerate. In the isomerase reaction, S2AL is rearranged via a Mg-dependent methyl migration to produce 3-hydroxy-3-methyl-2-ketobutyrate (HMKB). In the reductase reaction, this 2-ketoacid undergoes a metal-dependent reduction by NADPH to yield (R)-2,3-dihydroxy-isovalerate.</text>
</comment>
<comment type="catalytic activity">
    <reaction evidence="1">
        <text>(2R)-2,3-dihydroxy-3-methylbutanoate + NADP(+) = (2S)-2-acetolactate + NADPH + H(+)</text>
        <dbReference type="Rhea" id="RHEA:22068"/>
        <dbReference type="ChEBI" id="CHEBI:15378"/>
        <dbReference type="ChEBI" id="CHEBI:49072"/>
        <dbReference type="ChEBI" id="CHEBI:57783"/>
        <dbReference type="ChEBI" id="CHEBI:58349"/>
        <dbReference type="ChEBI" id="CHEBI:58476"/>
        <dbReference type="EC" id="1.1.1.86"/>
    </reaction>
</comment>
<comment type="catalytic activity">
    <reaction evidence="1">
        <text>(2R,3R)-2,3-dihydroxy-3-methylpentanoate + NADP(+) = (S)-2-ethyl-2-hydroxy-3-oxobutanoate + NADPH + H(+)</text>
        <dbReference type="Rhea" id="RHEA:13493"/>
        <dbReference type="ChEBI" id="CHEBI:15378"/>
        <dbReference type="ChEBI" id="CHEBI:49256"/>
        <dbReference type="ChEBI" id="CHEBI:49258"/>
        <dbReference type="ChEBI" id="CHEBI:57783"/>
        <dbReference type="ChEBI" id="CHEBI:58349"/>
        <dbReference type="EC" id="1.1.1.86"/>
    </reaction>
</comment>
<comment type="cofactor">
    <cofactor evidence="1">
        <name>Mg(2+)</name>
        <dbReference type="ChEBI" id="CHEBI:18420"/>
    </cofactor>
    <text evidence="1">Binds 2 magnesium ions per subunit.</text>
</comment>
<comment type="pathway">
    <text evidence="1">Amino-acid biosynthesis; L-isoleucine biosynthesis; L-isoleucine from 2-oxobutanoate: step 2/4.</text>
</comment>
<comment type="pathway">
    <text evidence="1">Amino-acid biosynthesis; L-valine biosynthesis; L-valine from pyruvate: step 2/4.</text>
</comment>
<comment type="similarity">
    <text evidence="1">Belongs to the ketol-acid reductoisomerase family.</text>
</comment>
<proteinExistence type="inferred from homology"/>
<name>ILVC_ECO45</name>